<organism>
    <name type="scientific">Cupriavidus metallidurans (strain ATCC 43123 / DSM 2839 / NBRC 102507 / CH34)</name>
    <name type="common">Ralstonia metallidurans</name>
    <dbReference type="NCBI Taxonomy" id="266264"/>
    <lineage>
        <taxon>Bacteria</taxon>
        <taxon>Pseudomonadati</taxon>
        <taxon>Pseudomonadota</taxon>
        <taxon>Betaproteobacteria</taxon>
        <taxon>Burkholderiales</taxon>
        <taxon>Burkholderiaceae</taxon>
        <taxon>Cupriavidus</taxon>
    </lineage>
</organism>
<reference key="1">
    <citation type="journal article" date="2010" name="PLoS ONE">
        <title>The complete genome sequence of Cupriavidus metallidurans strain CH34, a master survivalist in harsh and anthropogenic environments.</title>
        <authorList>
            <person name="Janssen P.J."/>
            <person name="Van Houdt R."/>
            <person name="Moors H."/>
            <person name="Monsieurs P."/>
            <person name="Morin N."/>
            <person name="Michaux A."/>
            <person name="Benotmane M.A."/>
            <person name="Leys N."/>
            <person name="Vallaeys T."/>
            <person name="Lapidus A."/>
            <person name="Monchy S."/>
            <person name="Medigue C."/>
            <person name="Taghavi S."/>
            <person name="McCorkle S."/>
            <person name="Dunn J."/>
            <person name="van der Lelie D."/>
            <person name="Mergeay M."/>
        </authorList>
    </citation>
    <scope>NUCLEOTIDE SEQUENCE [LARGE SCALE GENOMIC DNA]</scope>
    <source>
        <strain>ATCC 43123 / DSM 2839 / NBRC 102507 / CH34</strain>
    </source>
</reference>
<keyword id="KW-0004">4Fe-4S</keyword>
<keyword id="KW-0408">Iron</keyword>
<keyword id="KW-0411">Iron-sulfur</keyword>
<keyword id="KW-0479">Metal-binding</keyword>
<keyword id="KW-0489">Methyltransferase</keyword>
<keyword id="KW-1185">Reference proteome</keyword>
<keyword id="KW-0698">rRNA processing</keyword>
<keyword id="KW-0949">S-adenosyl-L-methionine</keyword>
<keyword id="KW-0808">Transferase</keyword>
<comment type="function">
    <text evidence="1">Catalyzes the formation of 5-methyl-uridine at position 1939 (m5U1939) in 23S rRNA.</text>
</comment>
<comment type="catalytic activity">
    <reaction evidence="1">
        <text>uridine(1939) in 23S rRNA + S-adenosyl-L-methionine = 5-methyluridine(1939) in 23S rRNA + S-adenosyl-L-homocysteine + H(+)</text>
        <dbReference type="Rhea" id="RHEA:42908"/>
        <dbReference type="Rhea" id="RHEA-COMP:10278"/>
        <dbReference type="Rhea" id="RHEA-COMP:10279"/>
        <dbReference type="ChEBI" id="CHEBI:15378"/>
        <dbReference type="ChEBI" id="CHEBI:57856"/>
        <dbReference type="ChEBI" id="CHEBI:59789"/>
        <dbReference type="ChEBI" id="CHEBI:65315"/>
        <dbReference type="ChEBI" id="CHEBI:74447"/>
        <dbReference type="EC" id="2.1.1.190"/>
    </reaction>
</comment>
<comment type="similarity">
    <text evidence="1">Belongs to the class I-like SAM-binding methyltransferase superfamily. RNA M5U methyltransferase family. RlmD subfamily.</text>
</comment>
<comment type="sequence caution" evidence="3">
    <conflict type="erroneous initiation">
        <sequence resource="EMBL-CDS" id="ABF08991"/>
    </conflict>
</comment>
<evidence type="ECO:0000255" key="1">
    <source>
        <dbReference type="HAMAP-Rule" id="MF_01010"/>
    </source>
</evidence>
<evidence type="ECO:0000256" key="2">
    <source>
        <dbReference type="SAM" id="MobiDB-lite"/>
    </source>
</evidence>
<evidence type="ECO:0000305" key="3"/>
<sequence>MSSQPNPTSHPEAASAASAASNDPVVKIDSLDMEARGVGRLENEDGTPGKVIFVEGALPGETVAYRSYRRKPSYEQAHLVEVKQASVMRVKPGCQHFGVCGGCSMQHLDSRAQLAIKQRVLEDNLWHLSKVKPDVVFRPIAGPDWGYRYRARLTVRHVVKKGGVLVGFHERKSSYVADMTHCEILPPHVSAMLVPLRELVGGLSIHDRMPQIELAVGAEVTALVLRVLEPLNDADKDLLRAFADQHQVQFWLQPKGPDTVYPFYPAEQELAYTLPEFGIRMPFKPTDFTQVNHQINRVLIGRALRLLDAKPTDRLLDLFCGIGNFTLPLATQGASVMGIEGSEVLTTRALANAEYNGLAAKTSFACRNLFEVTAEDIAALGRFDRWLVDPPREGALAVCKALAELSQAGSDVLPKRIVYVSCSPATLARDAGLLVHEAGYRLAGAGVVNMFPHTSHVESIAVFERD</sequence>
<dbReference type="EC" id="2.1.1.190" evidence="1"/>
<dbReference type="EMBL" id="CP000352">
    <property type="protein sequence ID" value="ABF08991.1"/>
    <property type="status" value="ALT_INIT"/>
    <property type="molecule type" value="Genomic_DNA"/>
</dbReference>
<dbReference type="RefSeq" id="WP_011516825.1">
    <property type="nucleotide sequence ID" value="NC_007973.1"/>
</dbReference>
<dbReference type="SMR" id="Q1LLI5"/>
<dbReference type="STRING" id="266264.Rmet_2112"/>
<dbReference type="KEGG" id="rme:Rmet_2112"/>
<dbReference type="eggNOG" id="COG2265">
    <property type="taxonomic scope" value="Bacteria"/>
</dbReference>
<dbReference type="HOGENOM" id="CLU_014689_8_2_4"/>
<dbReference type="Proteomes" id="UP000002429">
    <property type="component" value="Chromosome"/>
</dbReference>
<dbReference type="GO" id="GO:0051539">
    <property type="term" value="F:4 iron, 4 sulfur cluster binding"/>
    <property type="evidence" value="ECO:0007669"/>
    <property type="project" value="UniProtKB-KW"/>
</dbReference>
<dbReference type="GO" id="GO:0005506">
    <property type="term" value="F:iron ion binding"/>
    <property type="evidence" value="ECO:0007669"/>
    <property type="project" value="UniProtKB-UniRule"/>
</dbReference>
<dbReference type="GO" id="GO:0003723">
    <property type="term" value="F:RNA binding"/>
    <property type="evidence" value="ECO:0007669"/>
    <property type="project" value="InterPro"/>
</dbReference>
<dbReference type="GO" id="GO:0070041">
    <property type="term" value="F:rRNA (uridine-C5-)-methyltransferase activity"/>
    <property type="evidence" value="ECO:0007669"/>
    <property type="project" value="UniProtKB-UniRule"/>
</dbReference>
<dbReference type="GO" id="GO:0070475">
    <property type="term" value="P:rRNA base methylation"/>
    <property type="evidence" value="ECO:0007669"/>
    <property type="project" value="TreeGrafter"/>
</dbReference>
<dbReference type="CDD" id="cd02440">
    <property type="entry name" value="AdoMet_MTases"/>
    <property type="match status" value="1"/>
</dbReference>
<dbReference type="Gene3D" id="2.40.50.1070">
    <property type="match status" value="1"/>
</dbReference>
<dbReference type="Gene3D" id="2.40.50.140">
    <property type="entry name" value="Nucleic acid-binding proteins"/>
    <property type="match status" value="1"/>
</dbReference>
<dbReference type="Gene3D" id="3.40.50.150">
    <property type="entry name" value="Vaccinia Virus protein VP39"/>
    <property type="match status" value="1"/>
</dbReference>
<dbReference type="HAMAP" id="MF_01010">
    <property type="entry name" value="23SrRNA_methyltr_RlmD"/>
    <property type="match status" value="1"/>
</dbReference>
<dbReference type="InterPro" id="IPR001566">
    <property type="entry name" value="23S_rRNA_MeTrfase_RlmD"/>
</dbReference>
<dbReference type="InterPro" id="IPR030391">
    <property type="entry name" value="MeTrfase_TrmA_CS"/>
</dbReference>
<dbReference type="InterPro" id="IPR012340">
    <property type="entry name" value="NA-bd_OB-fold"/>
</dbReference>
<dbReference type="InterPro" id="IPR029063">
    <property type="entry name" value="SAM-dependent_MTases_sf"/>
</dbReference>
<dbReference type="InterPro" id="IPR002792">
    <property type="entry name" value="TRAM_dom"/>
</dbReference>
<dbReference type="InterPro" id="IPR010280">
    <property type="entry name" value="U5_MeTrfase_fam"/>
</dbReference>
<dbReference type="NCBIfam" id="NF009639">
    <property type="entry name" value="PRK13168.1"/>
    <property type="match status" value="1"/>
</dbReference>
<dbReference type="PANTHER" id="PTHR11061:SF49">
    <property type="entry name" value="23S RRNA (URACIL(1939)-C(5))-METHYLTRANSFERASE RLMD"/>
    <property type="match status" value="1"/>
</dbReference>
<dbReference type="PANTHER" id="PTHR11061">
    <property type="entry name" value="RNA M5U METHYLTRANSFERASE"/>
    <property type="match status" value="1"/>
</dbReference>
<dbReference type="Pfam" id="PF01938">
    <property type="entry name" value="TRAM"/>
    <property type="match status" value="1"/>
</dbReference>
<dbReference type="Pfam" id="PF05958">
    <property type="entry name" value="tRNA_U5-meth_tr"/>
    <property type="match status" value="1"/>
</dbReference>
<dbReference type="SUPFAM" id="SSF50249">
    <property type="entry name" value="Nucleic acid-binding proteins"/>
    <property type="match status" value="1"/>
</dbReference>
<dbReference type="SUPFAM" id="SSF53335">
    <property type="entry name" value="S-adenosyl-L-methionine-dependent methyltransferases"/>
    <property type="match status" value="1"/>
</dbReference>
<dbReference type="PROSITE" id="PS51687">
    <property type="entry name" value="SAM_MT_RNA_M5U"/>
    <property type="match status" value="1"/>
</dbReference>
<dbReference type="PROSITE" id="PS50926">
    <property type="entry name" value="TRAM"/>
    <property type="match status" value="1"/>
</dbReference>
<dbReference type="PROSITE" id="PS01231">
    <property type="entry name" value="TRMA_2"/>
    <property type="match status" value="1"/>
</dbReference>
<gene>
    <name evidence="1" type="primary">rlmD</name>
    <name type="synonym">rumA</name>
    <name type="ordered locus">Rmet_2112</name>
</gene>
<name>RLMD_CUPMC</name>
<protein>
    <recommendedName>
        <fullName evidence="1">23S rRNA (uracil(1939)-C(5))-methyltransferase RlmD</fullName>
        <ecNumber evidence="1">2.1.1.190</ecNumber>
    </recommendedName>
    <alternativeName>
        <fullName evidence="1">23S rRNA(m5U1939)-methyltransferase</fullName>
    </alternativeName>
</protein>
<proteinExistence type="inferred from homology"/>
<feature type="chain" id="PRO_0000282058" description="23S rRNA (uracil(1939)-C(5))-methyltransferase RlmD">
    <location>
        <begin position="1"/>
        <end position="466"/>
    </location>
</feature>
<feature type="domain" description="TRAM" evidence="1">
    <location>
        <begin position="17"/>
        <end position="81"/>
    </location>
</feature>
<feature type="region of interest" description="Disordered" evidence="2">
    <location>
        <begin position="1"/>
        <end position="22"/>
    </location>
</feature>
<feature type="active site" description="Nucleophile" evidence="1">
    <location>
        <position position="422"/>
    </location>
</feature>
<feature type="binding site" evidence="1">
    <location>
        <position position="94"/>
    </location>
    <ligand>
        <name>[4Fe-4S] cluster</name>
        <dbReference type="ChEBI" id="CHEBI:49883"/>
    </ligand>
</feature>
<feature type="binding site" evidence="1">
    <location>
        <position position="100"/>
    </location>
    <ligand>
        <name>[4Fe-4S] cluster</name>
        <dbReference type="ChEBI" id="CHEBI:49883"/>
    </ligand>
</feature>
<feature type="binding site" evidence="1">
    <location>
        <position position="103"/>
    </location>
    <ligand>
        <name>[4Fe-4S] cluster</name>
        <dbReference type="ChEBI" id="CHEBI:49883"/>
    </ligand>
</feature>
<feature type="binding site" evidence="1">
    <location>
        <position position="182"/>
    </location>
    <ligand>
        <name>[4Fe-4S] cluster</name>
        <dbReference type="ChEBI" id="CHEBI:49883"/>
    </ligand>
</feature>
<feature type="binding site" evidence="1">
    <location>
        <position position="290"/>
    </location>
    <ligand>
        <name>S-adenosyl-L-methionine</name>
        <dbReference type="ChEBI" id="CHEBI:59789"/>
    </ligand>
</feature>
<feature type="binding site" evidence="1">
    <location>
        <position position="319"/>
    </location>
    <ligand>
        <name>S-adenosyl-L-methionine</name>
        <dbReference type="ChEBI" id="CHEBI:59789"/>
    </ligand>
</feature>
<feature type="binding site" evidence="1">
    <location>
        <position position="324"/>
    </location>
    <ligand>
        <name>S-adenosyl-L-methionine</name>
        <dbReference type="ChEBI" id="CHEBI:59789"/>
    </ligand>
</feature>
<feature type="binding site" evidence="1">
    <location>
        <position position="340"/>
    </location>
    <ligand>
        <name>S-adenosyl-L-methionine</name>
        <dbReference type="ChEBI" id="CHEBI:59789"/>
    </ligand>
</feature>
<feature type="binding site" evidence="1">
    <location>
        <position position="368"/>
    </location>
    <ligand>
        <name>S-adenosyl-L-methionine</name>
        <dbReference type="ChEBI" id="CHEBI:59789"/>
    </ligand>
</feature>
<feature type="binding site" evidence="1">
    <location>
        <position position="389"/>
    </location>
    <ligand>
        <name>S-adenosyl-L-methionine</name>
        <dbReference type="ChEBI" id="CHEBI:59789"/>
    </ligand>
</feature>
<accession>Q1LLI5</accession>